<keyword id="KW-0456">Lyase</keyword>
<keyword id="KW-0460">Magnesium</keyword>
<keyword id="KW-0479">Metal-binding</keyword>
<comment type="function">
    <text evidence="3">Sesquiterpene synthase that catalyzes the formation of sesquiterpenes and sesquiterpenoid alcohols (PubMed:24078339). Converts farnesyl diphosphate (FPP) to beta-caryophyllene (PubMed:24078339). Can use geranyl diphosphate (GPP) to produce myrcene, limonene and camphene (PubMed:24078339).</text>
</comment>
<comment type="catalytic activity">
    <reaction evidence="3">
        <text>(2E,6E)-farnesyl diphosphate = (-)-(E)-beta-caryophyllene + diphosphate</text>
        <dbReference type="Rhea" id="RHEA:28294"/>
        <dbReference type="ChEBI" id="CHEBI:10357"/>
        <dbReference type="ChEBI" id="CHEBI:33019"/>
        <dbReference type="ChEBI" id="CHEBI:175763"/>
        <dbReference type="EC" id="4.2.3.57"/>
    </reaction>
    <physiologicalReaction direction="left-to-right" evidence="3">
        <dbReference type="Rhea" id="RHEA:28295"/>
    </physiologicalReaction>
</comment>
<comment type="cofactor">
    <cofactor evidence="1">
        <name>Mg(2+)</name>
        <dbReference type="ChEBI" id="CHEBI:18420"/>
    </cofactor>
    <text evidence="1">Binds 3 Mg(2+) ions per subunit.</text>
</comment>
<comment type="pathway">
    <text evidence="5">Secondary metabolite biosynthesis; terpenoid biosynthesis.</text>
</comment>
<comment type="domain">
    <text evidence="5">The Asp-Asp-Xaa-Xaa-Asp/Glu (DDXXD/E) motif is important for the catalytic activity, presumably through binding to Mg(2+).</text>
</comment>
<comment type="similarity">
    <text evidence="5">Belongs to the terpene synthase family.</text>
</comment>
<organism>
    <name type="scientific">Lavandula angustifolia</name>
    <name type="common">Lavender</name>
    <dbReference type="NCBI Taxonomy" id="39329"/>
    <lineage>
        <taxon>Eukaryota</taxon>
        <taxon>Viridiplantae</taxon>
        <taxon>Streptophyta</taxon>
        <taxon>Embryophyta</taxon>
        <taxon>Tracheophyta</taxon>
        <taxon>Spermatophyta</taxon>
        <taxon>Magnoliopsida</taxon>
        <taxon>eudicotyledons</taxon>
        <taxon>Gunneridae</taxon>
        <taxon>Pentapetalae</taxon>
        <taxon>asterids</taxon>
        <taxon>lamiids</taxon>
        <taxon>Lamiales</taxon>
        <taxon>Lamiaceae</taxon>
        <taxon>Nepetoideae</taxon>
        <taxon>Ocimeae</taxon>
        <taxon>Lavandulinae</taxon>
        <taxon>Lavandula</taxon>
    </lineage>
</organism>
<accession>U3LVZ7</accession>
<evidence type="ECO:0000250" key="1">
    <source>
        <dbReference type="UniProtKB" id="Q40577"/>
    </source>
</evidence>
<evidence type="ECO:0000250" key="2">
    <source>
        <dbReference type="UniProtKB" id="U3LW50"/>
    </source>
</evidence>
<evidence type="ECO:0000269" key="3">
    <source>
    </source>
</evidence>
<evidence type="ECO:0000303" key="4">
    <source>
    </source>
</evidence>
<evidence type="ECO:0000305" key="5"/>
<dbReference type="EC" id="4.2.3.57" evidence="3"/>
<dbReference type="EMBL" id="JX401283">
    <property type="protein sequence ID" value="AGL98419.1"/>
    <property type="molecule type" value="mRNA"/>
</dbReference>
<dbReference type="SMR" id="U3LVZ7"/>
<dbReference type="BRENDA" id="4.2.3.57">
    <property type="organism ID" value="9723"/>
</dbReference>
<dbReference type="UniPathway" id="UPA00213"/>
<dbReference type="GO" id="GO:0080016">
    <property type="term" value="F:(-)-E-beta-caryophyllene synthase activity"/>
    <property type="evidence" value="ECO:0000314"/>
    <property type="project" value="UniProtKB"/>
</dbReference>
<dbReference type="GO" id="GO:0000287">
    <property type="term" value="F:magnesium ion binding"/>
    <property type="evidence" value="ECO:0007669"/>
    <property type="project" value="InterPro"/>
</dbReference>
<dbReference type="GO" id="GO:1901937">
    <property type="term" value="P:beta-caryophyllene biosynthetic process"/>
    <property type="evidence" value="ECO:0000314"/>
    <property type="project" value="UniProtKB"/>
</dbReference>
<dbReference type="GO" id="GO:0016102">
    <property type="term" value="P:diterpenoid biosynthetic process"/>
    <property type="evidence" value="ECO:0007669"/>
    <property type="project" value="InterPro"/>
</dbReference>
<dbReference type="CDD" id="cd00684">
    <property type="entry name" value="Terpene_cyclase_plant_C1"/>
    <property type="match status" value="1"/>
</dbReference>
<dbReference type="FunFam" id="1.10.600.10:FF:000007">
    <property type="entry name" value="Isoprene synthase, chloroplastic"/>
    <property type="match status" value="1"/>
</dbReference>
<dbReference type="FunFam" id="1.50.10.130:FF:000001">
    <property type="entry name" value="Isoprene synthase, chloroplastic"/>
    <property type="match status" value="1"/>
</dbReference>
<dbReference type="Gene3D" id="1.10.600.10">
    <property type="entry name" value="Farnesyl Diphosphate Synthase"/>
    <property type="match status" value="1"/>
</dbReference>
<dbReference type="Gene3D" id="1.50.10.130">
    <property type="entry name" value="Terpene synthase, N-terminal domain"/>
    <property type="match status" value="1"/>
</dbReference>
<dbReference type="InterPro" id="IPR008949">
    <property type="entry name" value="Isoprenoid_synthase_dom_sf"/>
</dbReference>
<dbReference type="InterPro" id="IPR034741">
    <property type="entry name" value="Terpene_cyclase-like_1_C"/>
</dbReference>
<dbReference type="InterPro" id="IPR044814">
    <property type="entry name" value="Terpene_cyclase_plant_C1"/>
</dbReference>
<dbReference type="InterPro" id="IPR001906">
    <property type="entry name" value="Terpene_synth_N"/>
</dbReference>
<dbReference type="InterPro" id="IPR036965">
    <property type="entry name" value="Terpene_synth_N_sf"/>
</dbReference>
<dbReference type="InterPro" id="IPR050148">
    <property type="entry name" value="Terpene_synthase-like"/>
</dbReference>
<dbReference type="InterPro" id="IPR005630">
    <property type="entry name" value="Terpene_synthase_metal-bd"/>
</dbReference>
<dbReference type="InterPro" id="IPR008930">
    <property type="entry name" value="Terpenoid_cyclase/PrenylTrfase"/>
</dbReference>
<dbReference type="PANTHER" id="PTHR31225:SF221">
    <property type="entry name" value="(-)-GERMACRENE D SYNTHASE"/>
    <property type="match status" value="1"/>
</dbReference>
<dbReference type="PANTHER" id="PTHR31225">
    <property type="entry name" value="OS04G0344100 PROTEIN-RELATED"/>
    <property type="match status" value="1"/>
</dbReference>
<dbReference type="Pfam" id="PF01397">
    <property type="entry name" value="Terpene_synth"/>
    <property type="match status" value="1"/>
</dbReference>
<dbReference type="Pfam" id="PF03936">
    <property type="entry name" value="Terpene_synth_C"/>
    <property type="match status" value="1"/>
</dbReference>
<dbReference type="SFLD" id="SFLDS00005">
    <property type="entry name" value="Isoprenoid_Synthase_Type_I"/>
    <property type="match status" value="1"/>
</dbReference>
<dbReference type="SFLD" id="SFLDG01019">
    <property type="entry name" value="Terpene_Cyclase_Like_1_C_Termi"/>
    <property type="match status" value="1"/>
</dbReference>
<dbReference type="SUPFAM" id="SSF48239">
    <property type="entry name" value="Terpenoid cyclases/Protein prenyltransferases"/>
    <property type="match status" value="1"/>
</dbReference>
<dbReference type="SUPFAM" id="SSF48576">
    <property type="entry name" value="Terpenoid synthases"/>
    <property type="match status" value="1"/>
</dbReference>
<protein>
    <recommendedName>
        <fullName evidence="4">Beta-caryophyllene synthase</fullName>
        <shortName evidence="4">LaCARS</shortName>
        <ecNumber evidence="3">4.2.3.57</ecNumber>
    </recommendedName>
    <alternativeName>
        <fullName evidence="5">(-)-beta-caryophyllene synthase</fullName>
    </alternativeName>
</protein>
<gene>
    <name evidence="4" type="primary">CARS</name>
</gene>
<proteinExistence type="evidence at protein level"/>
<reference key="1">
    <citation type="journal article" date="2014" name="Plant Mol. Biol.">
        <title>Isolation and functional characterization of a tau-cadinol synthase, a new sesquiterpene synthase from Lavandula angustifolia.</title>
        <authorList>
            <person name="Jullien F."/>
            <person name="Moja S."/>
            <person name="Bony A."/>
            <person name="Legrand S."/>
            <person name="Petit C."/>
            <person name="Benabdelkader T."/>
            <person name="Poirot K."/>
            <person name="Fiorucci S."/>
            <person name="Guitton Y."/>
            <person name="Nicole F."/>
            <person name="Baudino S."/>
            <person name="Magnard J.L."/>
        </authorList>
    </citation>
    <scope>NUCLEOTIDE SEQUENCE [MRNA]</scope>
    <scope>FUNCTION</scope>
    <scope>CATALYTIC ACTIVITY</scope>
</reference>
<feature type="chain" id="PRO_0000452464" description="Beta-caryophyllene synthase">
    <location>
        <begin position="1"/>
        <end position="548"/>
    </location>
</feature>
<feature type="short sequence motif" description="DDXXD motif" evidence="2">
    <location>
        <begin position="305"/>
        <end position="309"/>
    </location>
</feature>
<feature type="binding site" evidence="1">
    <location>
        <position position="268"/>
    </location>
    <ligand>
        <name>(2E,6E)-farnesyl diphosphate</name>
        <dbReference type="ChEBI" id="CHEBI:175763"/>
    </ligand>
</feature>
<feature type="binding site" evidence="1">
    <location>
        <position position="305"/>
    </location>
    <ligand>
        <name>(2E,6E)-farnesyl diphosphate</name>
        <dbReference type="ChEBI" id="CHEBI:175763"/>
    </ligand>
</feature>
<feature type="binding site" evidence="1">
    <location>
        <position position="305"/>
    </location>
    <ligand>
        <name>Mg(2+)</name>
        <dbReference type="ChEBI" id="CHEBI:18420"/>
        <label>1</label>
    </ligand>
</feature>
<feature type="binding site" evidence="1">
    <location>
        <position position="305"/>
    </location>
    <ligand>
        <name>Mg(2+)</name>
        <dbReference type="ChEBI" id="CHEBI:18420"/>
        <label>2</label>
    </ligand>
</feature>
<feature type="binding site" evidence="1">
    <location>
        <position position="309"/>
    </location>
    <ligand>
        <name>(2E,6E)-farnesyl diphosphate</name>
        <dbReference type="ChEBI" id="CHEBI:175763"/>
    </ligand>
</feature>
<feature type="binding site" evidence="1">
    <location>
        <position position="309"/>
    </location>
    <ligand>
        <name>Mg(2+)</name>
        <dbReference type="ChEBI" id="CHEBI:18420"/>
        <label>1</label>
    </ligand>
</feature>
<feature type="binding site" evidence="1">
    <location>
        <position position="309"/>
    </location>
    <ligand>
        <name>Mg(2+)</name>
        <dbReference type="ChEBI" id="CHEBI:18420"/>
        <label>2</label>
    </ligand>
</feature>
<feature type="binding site" evidence="1">
    <location>
        <position position="446"/>
    </location>
    <ligand>
        <name>(2E,6E)-farnesyl diphosphate</name>
        <dbReference type="ChEBI" id="CHEBI:175763"/>
    </ligand>
</feature>
<feature type="binding site" evidence="1">
    <location>
        <position position="449"/>
    </location>
    <ligand>
        <name>(2E,6E)-farnesyl diphosphate</name>
        <dbReference type="ChEBI" id="CHEBI:175763"/>
    </ligand>
</feature>
<feature type="binding site" evidence="1">
    <location>
        <position position="449"/>
    </location>
    <ligand>
        <name>Mg(2+)</name>
        <dbReference type="ChEBI" id="CHEBI:18420"/>
        <label>3</label>
    </ligand>
</feature>
<feature type="binding site" evidence="1">
    <location>
        <position position="457"/>
    </location>
    <ligand>
        <name>Mg(2+)</name>
        <dbReference type="ChEBI" id="CHEBI:18420"/>
        <label>3</label>
    </ligand>
</feature>
<sequence length="548" mass="63644">MAAPISTNNVCSDDARPVTYHPNVWSDYFLRYTSELTEISVAKKEEHERQKEAIRNLLLQTRDDSTLKLELVDAIQRLGIGYHFEEEIHNSLRNIYDTNPIYNAEDDNLRVAALRFRLIRQQGFPAPCDVFRKFVDEEGEFKSWVSNDVEGLLNLYEASNFAVHGEEILEKALEFCSLRLEFLTQGMTNSLSMRVKEALKIPISKTLTRLGARKFMSMYQEDESHNETLLNFAKLDFNLVQKIHQKELNQITRWWKELDFGKNLPFARDRPVECYFWIVGVYFEPRYGIARTLLTKIIYLASVLDDIYDVYGTLAELTIFTQIIRRWDSDAMDQLPPYMRIYCKALFDVYVEMEEEMGKIRKSYAVEYAKKEMKRLAEMYFQEAQWAFSKYKPTMKEYLKVALISSGYMMMTINSLTTIEDLITEEEFNWILSEPRILRASLTITRLMDDLAGYGTEGKMSAVHYYMAENGVSEGEAFKEVSGIIKSAWKDVNAECVEPRAASTTILRCVVDFTRVIVLLYSDEDAYGNSQTKTKDLIKSVLVDPLII</sequence>
<name>CARS_LAVAN</name>